<keyword id="KW-0131">Cell cycle</keyword>
<keyword id="KW-0132">Cell division</keyword>
<keyword id="KW-0133">Cell shape</keyword>
<keyword id="KW-0961">Cell wall biogenesis/degradation</keyword>
<keyword id="KW-0963">Cytoplasm</keyword>
<keyword id="KW-0274">FAD</keyword>
<keyword id="KW-0285">Flavoprotein</keyword>
<keyword id="KW-0521">NADP</keyword>
<keyword id="KW-0560">Oxidoreductase</keyword>
<keyword id="KW-0573">Peptidoglycan synthesis</keyword>
<keyword id="KW-1185">Reference proteome</keyword>
<gene>
    <name evidence="1" type="primary">murB</name>
    <name type="ordered locus">PP_1904</name>
</gene>
<accession>Q88LM5</accession>
<proteinExistence type="inferred from homology"/>
<protein>
    <recommendedName>
        <fullName evidence="1">UDP-N-acetylenolpyruvoylglucosamine reductase</fullName>
        <ecNumber evidence="1">1.3.1.98</ecNumber>
    </recommendedName>
    <alternativeName>
        <fullName evidence="1">UDP-N-acetylmuramate dehydrogenase</fullName>
    </alternativeName>
</protein>
<dbReference type="EC" id="1.3.1.98" evidence="1"/>
<dbReference type="EMBL" id="AE015451">
    <property type="protein sequence ID" value="AAN67523.1"/>
    <property type="status" value="ALT_INIT"/>
    <property type="molecule type" value="Genomic_DNA"/>
</dbReference>
<dbReference type="RefSeq" id="NP_744059.1">
    <property type="nucleotide sequence ID" value="NC_002947.4"/>
</dbReference>
<dbReference type="RefSeq" id="WP_049586861.1">
    <property type="nucleotide sequence ID" value="NZ_CP169744.1"/>
</dbReference>
<dbReference type="SMR" id="Q88LM5"/>
<dbReference type="STRING" id="160488.PP_1904"/>
<dbReference type="PaxDb" id="160488-PP_1904"/>
<dbReference type="GeneID" id="83681551"/>
<dbReference type="KEGG" id="ppu:PP_1904"/>
<dbReference type="PATRIC" id="fig|160488.4.peg.2010"/>
<dbReference type="eggNOG" id="COG0812">
    <property type="taxonomic scope" value="Bacteria"/>
</dbReference>
<dbReference type="HOGENOM" id="CLU_035304_0_0_6"/>
<dbReference type="OrthoDB" id="9804753at2"/>
<dbReference type="PhylomeDB" id="Q88LM5"/>
<dbReference type="UniPathway" id="UPA00219"/>
<dbReference type="Proteomes" id="UP000000556">
    <property type="component" value="Chromosome"/>
</dbReference>
<dbReference type="GO" id="GO:0005829">
    <property type="term" value="C:cytosol"/>
    <property type="evidence" value="ECO:0007669"/>
    <property type="project" value="TreeGrafter"/>
</dbReference>
<dbReference type="GO" id="GO:0071949">
    <property type="term" value="F:FAD binding"/>
    <property type="evidence" value="ECO:0007669"/>
    <property type="project" value="InterPro"/>
</dbReference>
<dbReference type="GO" id="GO:0008762">
    <property type="term" value="F:UDP-N-acetylmuramate dehydrogenase activity"/>
    <property type="evidence" value="ECO:0007669"/>
    <property type="project" value="UniProtKB-UniRule"/>
</dbReference>
<dbReference type="GO" id="GO:0051301">
    <property type="term" value="P:cell division"/>
    <property type="evidence" value="ECO:0007669"/>
    <property type="project" value="UniProtKB-KW"/>
</dbReference>
<dbReference type="GO" id="GO:0071555">
    <property type="term" value="P:cell wall organization"/>
    <property type="evidence" value="ECO:0007669"/>
    <property type="project" value="UniProtKB-KW"/>
</dbReference>
<dbReference type="GO" id="GO:0009252">
    <property type="term" value="P:peptidoglycan biosynthetic process"/>
    <property type="evidence" value="ECO:0007669"/>
    <property type="project" value="UniProtKB-UniRule"/>
</dbReference>
<dbReference type="GO" id="GO:0008360">
    <property type="term" value="P:regulation of cell shape"/>
    <property type="evidence" value="ECO:0007669"/>
    <property type="project" value="UniProtKB-KW"/>
</dbReference>
<dbReference type="Gene3D" id="3.30.465.10">
    <property type="match status" value="1"/>
</dbReference>
<dbReference type="Gene3D" id="3.90.78.10">
    <property type="entry name" value="UDP-N-acetylenolpyruvoylglucosamine reductase, C-terminal domain"/>
    <property type="match status" value="1"/>
</dbReference>
<dbReference type="Gene3D" id="3.30.43.10">
    <property type="entry name" value="Uridine Diphospho-n-acetylenolpyruvylglucosamine Reductase, domain 2"/>
    <property type="match status" value="1"/>
</dbReference>
<dbReference type="HAMAP" id="MF_00037">
    <property type="entry name" value="MurB"/>
    <property type="match status" value="1"/>
</dbReference>
<dbReference type="InterPro" id="IPR016166">
    <property type="entry name" value="FAD-bd_PCMH"/>
</dbReference>
<dbReference type="InterPro" id="IPR036318">
    <property type="entry name" value="FAD-bd_PCMH-like_sf"/>
</dbReference>
<dbReference type="InterPro" id="IPR016167">
    <property type="entry name" value="FAD-bd_PCMH_sub1"/>
</dbReference>
<dbReference type="InterPro" id="IPR016169">
    <property type="entry name" value="FAD-bd_PCMH_sub2"/>
</dbReference>
<dbReference type="InterPro" id="IPR003170">
    <property type="entry name" value="MurB"/>
</dbReference>
<dbReference type="InterPro" id="IPR011601">
    <property type="entry name" value="MurB_C"/>
</dbReference>
<dbReference type="InterPro" id="IPR036635">
    <property type="entry name" value="MurB_C_sf"/>
</dbReference>
<dbReference type="InterPro" id="IPR006094">
    <property type="entry name" value="Oxid_FAD_bind_N"/>
</dbReference>
<dbReference type="NCBIfam" id="TIGR00179">
    <property type="entry name" value="murB"/>
    <property type="match status" value="1"/>
</dbReference>
<dbReference type="NCBIfam" id="NF000755">
    <property type="entry name" value="PRK00046.1"/>
    <property type="match status" value="1"/>
</dbReference>
<dbReference type="NCBIfam" id="NF010478">
    <property type="entry name" value="PRK13903.1"/>
    <property type="match status" value="1"/>
</dbReference>
<dbReference type="PANTHER" id="PTHR21071">
    <property type="entry name" value="UDP-N-ACETYLENOLPYRUVOYLGLUCOSAMINE REDUCTASE"/>
    <property type="match status" value="1"/>
</dbReference>
<dbReference type="PANTHER" id="PTHR21071:SF4">
    <property type="entry name" value="UDP-N-ACETYLENOLPYRUVOYLGLUCOSAMINE REDUCTASE"/>
    <property type="match status" value="1"/>
</dbReference>
<dbReference type="Pfam" id="PF01565">
    <property type="entry name" value="FAD_binding_4"/>
    <property type="match status" value="1"/>
</dbReference>
<dbReference type="Pfam" id="PF02873">
    <property type="entry name" value="MurB_C"/>
    <property type="match status" value="1"/>
</dbReference>
<dbReference type="SUPFAM" id="SSF56176">
    <property type="entry name" value="FAD-binding/transporter-associated domain-like"/>
    <property type="match status" value="1"/>
</dbReference>
<dbReference type="SUPFAM" id="SSF56194">
    <property type="entry name" value="Uridine diphospho-N-Acetylenolpyruvylglucosamine reductase, MurB, C-terminal domain"/>
    <property type="match status" value="1"/>
</dbReference>
<dbReference type="PROSITE" id="PS51387">
    <property type="entry name" value="FAD_PCMH"/>
    <property type="match status" value="1"/>
</dbReference>
<comment type="function">
    <text evidence="1">Cell wall formation.</text>
</comment>
<comment type="catalytic activity">
    <reaction evidence="1">
        <text>UDP-N-acetyl-alpha-D-muramate + NADP(+) = UDP-N-acetyl-3-O-(1-carboxyvinyl)-alpha-D-glucosamine + NADPH + H(+)</text>
        <dbReference type="Rhea" id="RHEA:12248"/>
        <dbReference type="ChEBI" id="CHEBI:15378"/>
        <dbReference type="ChEBI" id="CHEBI:57783"/>
        <dbReference type="ChEBI" id="CHEBI:58349"/>
        <dbReference type="ChEBI" id="CHEBI:68483"/>
        <dbReference type="ChEBI" id="CHEBI:70757"/>
        <dbReference type="EC" id="1.3.1.98"/>
    </reaction>
</comment>
<comment type="cofactor">
    <cofactor evidence="1">
        <name>FAD</name>
        <dbReference type="ChEBI" id="CHEBI:57692"/>
    </cofactor>
</comment>
<comment type="pathway">
    <text evidence="1">Cell wall biogenesis; peptidoglycan biosynthesis.</text>
</comment>
<comment type="subcellular location">
    <subcellularLocation>
        <location evidence="1">Cytoplasm</location>
    </subcellularLocation>
</comment>
<comment type="similarity">
    <text evidence="1">Belongs to the MurB family.</text>
</comment>
<comment type="sequence caution" evidence="2">
    <conflict type="erroneous initiation">
        <sequence resource="EMBL-CDS" id="AAN67523"/>
    </conflict>
</comment>
<name>MURB_PSEPK</name>
<feature type="chain" id="PRO_0000179243" description="UDP-N-acetylenolpyruvoylglucosamine reductase">
    <location>
        <begin position="1"/>
        <end position="339"/>
    </location>
</feature>
<feature type="domain" description="FAD-binding PCMH-type" evidence="1">
    <location>
        <begin position="18"/>
        <end position="189"/>
    </location>
</feature>
<feature type="active site" evidence="1">
    <location>
        <position position="166"/>
    </location>
</feature>
<feature type="active site" description="Proton donor" evidence="1">
    <location>
        <position position="239"/>
    </location>
</feature>
<feature type="active site" evidence="1">
    <location>
        <position position="335"/>
    </location>
</feature>
<evidence type="ECO:0000255" key="1">
    <source>
        <dbReference type="HAMAP-Rule" id="MF_00037"/>
    </source>
</evidence>
<evidence type="ECO:0000305" key="2"/>
<reference key="1">
    <citation type="journal article" date="2002" name="Environ. Microbiol.">
        <title>Complete genome sequence and comparative analysis of the metabolically versatile Pseudomonas putida KT2440.</title>
        <authorList>
            <person name="Nelson K.E."/>
            <person name="Weinel C."/>
            <person name="Paulsen I.T."/>
            <person name="Dodson R.J."/>
            <person name="Hilbert H."/>
            <person name="Martins dos Santos V.A.P."/>
            <person name="Fouts D.E."/>
            <person name="Gill S.R."/>
            <person name="Pop M."/>
            <person name="Holmes M."/>
            <person name="Brinkac L.M."/>
            <person name="Beanan M.J."/>
            <person name="DeBoy R.T."/>
            <person name="Daugherty S.C."/>
            <person name="Kolonay J.F."/>
            <person name="Madupu R."/>
            <person name="Nelson W.C."/>
            <person name="White O."/>
            <person name="Peterson J.D."/>
            <person name="Khouri H.M."/>
            <person name="Hance I."/>
            <person name="Chris Lee P."/>
            <person name="Holtzapple E.K."/>
            <person name="Scanlan D."/>
            <person name="Tran K."/>
            <person name="Moazzez A."/>
            <person name="Utterback T.R."/>
            <person name="Rizzo M."/>
            <person name="Lee K."/>
            <person name="Kosack D."/>
            <person name="Moestl D."/>
            <person name="Wedler H."/>
            <person name="Lauber J."/>
            <person name="Stjepandic D."/>
            <person name="Hoheisel J."/>
            <person name="Straetz M."/>
            <person name="Heim S."/>
            <person name="Kiewitz C."/>
            <person name="Eisen J.A."/>
            <person name="Timmis K.N."/>
            <person name="Duesterhoeft A."/>
            <person name="Tuemmler B."/>
            <person name="Fraser C.M."/>
        </authorList>
    </citation>
    <scope>NUCLEOTIDE SEQUENCE [LARGE SCALE GENOMIC DNA]</scope>
    <source>
        <strain>ATCC 47054 / DSM 6125 / CFBP 8728 / NCIMB 11950 / KT2440</strain>
    </source>
</reference>
<organism>
    <name type="scientific">Pseudomonas putida (strain ATCC 47054 / DSM 6125 / CFBP 8728 / NCIMB 11950 / KT2440)</name>
    <dbReference type="NCBI Taxonomy" id="160488"/>
    <lineage>
        <taxon>Bacteria</taxon>
        <taxon>Pseudomonadati</taxon>
        <taxon>Pseudomonadota</taxon>
        <taxon>Gammaproteobacteria</taxon>
        <taxon>Pseudomonadales</taxon>
        <taxon>Pseudomonadaceae</taxon>
        <taxon>Pseudomonas</taxon>
    </lineage>
</organism>
<sequence>MTVQWQEQVSLKPYNTFGIDVKARYFSQVQDDQQVRQALGQAQQRGLPVLVIGGGSNLLLTRDIDALVLHMASRGRRVLSDDGERIVVEAEAGEPWHAFVQWTLAQGYCGLENLSLIPGTVGAAPMQNVGAYGVEIKDVFAGLTALDRETGELRDFSLAECAFGYRDSLFKRNPGRWLILRVRFALTRTLHAHLDYGPVRQRLSERGVTELTAQAISDAICSIRREKLPDPAELGNAGSFFKNPVVTADLVERIRAQYPGVVAYPQADGQVKLAAGWLIEQAGWKGHREGDAGVHRLQSLVLVNYGQASGAQMHALARKIQADIFERFGVELEMEPNLY</sequence>